<accession>Q1CB62</accession>
<name>E4PD_YERPA</name>
<comment type="function">
    <text evidence="1">Catalyzes the NAD-dependent conversion of D-erythrose 4-phosphate to 4-phosphoerythronate.</text>
</comment>
<comment type="catalytic activity">
    <reaction evidence="1">
        <text>D-erythrose 4-phosphate + NAD(+) + H2O = 4-phospho-D-erythronate + NADH + 2 H(+)</text>
        <dbReference type="Rhea" id="RHEA:12056"/>
        <dbReference type="ChEBI" id="CHEBI:15377"/>
        <dbReference type="ChEBI" id="CHEBI:15378"/>
        <dbReference type="ChEBI" id="CHEBI:16897"/>
        <dbReference type="ChEBI" id="CHEBI:57540"/>
        <dbReference type="ChEBI" id="CHEBI:57945"/>
        <dbReference type="ChEBI" id="CHEBI:58766"/>
        <dbReference type="EC" id="1.2.1.72"/>
    </reaction>
</comment>
<comment type="pathway">
    <text evidence="1">Cofactor biosynthesis; pyridoxine 5'-phosphate biosynthesis; pyridoxine 5'-phosphate from D-erythrose 4-phosphate: step 1/5.</text>
</comment>
<comment type="subunit">
    <text evidence="1">Homotetramer.</text>
</comment>
<comment type="subcellular location">
    <subcellularLocation>
        <location evidence="1">Cytoplasm</location>
    </subcellularLocation>
</comment>
<comment type="similarity">
    <text evidence="1">Belongs to the glyceraldehyde-3-phosphate dehydrogenase family. Epd subfamily.</text>
</comment>
<protein>
    <recommendedName>
        <fullName evidence="1">D-erythrose-4-phosphate dehydrogenase</fullName>
        <shortName evidence="1">E4PDH</shortName>
        <ecNumber evidence="1">1.2.1.72</ecNumber>
    </recommendedName>
</protein>
<sequence>MAIRIAINGFGRIGRSVLRALYESGRRAEISVVAINELASAEGMAHLLKYDSSHGRFAWDVRQECDSLYVGDDIIRLIHQSEIEQLPWSELGIDVVLDCSGVYGSREDGEAHVASGAKKVLFAHPGGHDLDATVVYGVNHQDLRAEHRIVSNASCTTNCIIPIIQLLDIAYGIESGTVTTIHSSMNDQPVIDAYHQDLRRTRAASQSIIPVDTKLAAGITRIFPKFCDRFEAISVRVPTINVTAIDLSVSVTHPVGVAEVNQLLQKAARGAFRGIVDYTELPLVSMDFNHDPHSAIVDGTQTRVSGQHLIKTLVWCDNEWGFANRMLDTTLAMAKSGF</sequence>
<organism>
    <name type="scientific">Yersinia pestis bv. Antiqua (strain Antiqua)</name>
    <dbReference type="NCBI Taxonomy" id="360102"/>
    <lineage>
        <taxon>Bacteria</taxon>
        <taxon>Pseudomonadati</taxon>
        <taxon>Pseudomonadota</taxon>
        <taxon>Gammaproteobacteria</taxon>
        <taxon>Enterobacterales</taxon>
        <taxon>Yersiniaceae</taxon>
        <taxon>Yersinia</taxon>
    </lineage>
</organism>
<feature type="chain" id="PRO_0000293179" description="D-erythrose-4-phosphate dehydrogenase">
    <location>
        <begin position="1"/>
        <end position="338"/>
    </location>
</feature>
<feature type="active site" description="Nucleophile" evidence="1">
    <location>
        <position position="155"/>
    </location>
</feature>
<feature type="binding site" evidence="1">
    <location>
        <begin position="12"/>
        <end position="13"/>
    </location>
    <ligand>
        <name>NAD(+)</name>
        <dbReference type="ChEBI" id="CHEBI:57540"/>
    </ligand>
</feature>
<feature type="binding site" evidence="1">
    <location>
        <begin position="154"/>
        <end position="156"/>
    </location>
    <ligand>
        <name>substrate</name>
    </ligand>
</feature>
<feature type="binding site" evidence="1">
    <location>
        <position position="200"/>
    </location>
    <ligand>
        <name>substrate</name>
    </ligand>
</feature>
<feature type="binding site" evidence="1">
    <location>
        <begin position="213"/>
        <end position="214"/>
    </location>
    <ligand>
        <name>substrate</name>
    </ligand>
</feature>
<feature type="binding site" evidence="1">
    <location>
        <position position="236"/>
    </location>
    <ligand>
        <name>substrate</name>
    </ligand>
</feature>
<feature type="binding site" evidence="1">
    <location>
        <position position="318"/>
    </location>
    <ligand>
        <name>NAD(+)</name>
        <dbReference type="ChEBI" id="CHEBI:57540"/>
    </ligand>
</feature>
<feature type="site" description="Activates thiol group during catalysis" evidence="1">
    <location>
        <position position="182"/>
    </location>
</feature>
<reference key="1">
    <citation type="journal article" date="2006" name="J. Bacteriol.">
        <title>Complete genome sequence of Yersinia pestis strains Antiqua and Nepal516: evidence of gene reduction in an emerging pathogen.</title>
        <authorList>
            <person name="Chain P.S.G."/>
            <person name="Hu P."/>
            <person name="Malfatti S.A."/>
            <person name="Radnedge L."/>
            <person name="Larimer F."/>
            <person name="Vergez L.M."/>
            <person name="Worsham P."/>
            <person name="Chu M.C."/>
            <person name="Andersen G.L."/>
        </authorList>
    </citation>
    <scope>NUCLEOTIDE SEQUENCE [LARGE SCALE GENOMIC DNA]</scope>
    <source>
        <strain>Antiqua</strain>
    </source>
</reference>
<evidence type="ECO:0000255" key="1">
    <source>
        <dbReference type="HAMAP-Rule" id="MF_01640"/>
    </source>
</evidence>
<dbReference type="EC" id="1.2.1.72" evidence="1"/>
<dbReference type="EMBL" id="CP000308">
    <property type="protein sequence ID" value="ABG12310.1"/>
    <property type="molecule type" value="Genomic_DNA"/>
</dbReference>
<dbReference type="RefSeq" id="WP_002209964.1">
    <property type="nucleotide sequence ID" value="NZ_CP009906.1"/>
</dbReference>
<dbReference type="SMR" id="Q1CB62"/>
<dbReference type="GeneID" id="57973718"/>
<dbReference type="KEGG" id="ypa:YPA_0342"/>
<dbReference type="UniPathway" id="UPA00244">
    <property type="reaction ID" value="UER00309"/>
</dbReference>
<dbReference type="Proteomes" id="UP000001971">
    <property type="component" value="Chromosome"/>
</dbReference>
<dbReference type="GO" id="GO:0005737">
    <property type="term" value="C:cytoplasm"/>
    <property type="evidence" value="ECO:0007669"/>
    <property type="project" value="UniProtKB-SubCell"/>
</dbReference>
<dbReference type="GO" id="GO:0048001">
    <property type="term" value="F:erythrose-4-phosphate dehydrogenase activity"/>
    <property type="evidence" value="ECO:0007669"/>
    <property type="project" value="UniProtKB-UniRule"/>
</dbReference>
<dbReference type="GO" id="GO:0051287">
    <property type="term" value="F:NAD binding"/>
    <property type="evidence" value="ECO:0007669"/>
    <property type="project" value="InterPro"/>
</dbReference>
<dbReference type="GO" id="GO:0042823">
    <property type="term" value="P:pyridoxal phosphate biosynthetic process"/>
    <property type="evidence" value="ECO:0007669"/>
    <property type="project" value="UniProtKB-UniRule"/>
</dbReference>
<dbReference type="GO" id="GO:0008615">
    <property type="term" value="P:pyridoxine biosynthetic process"/>
    <property type="evidence" value="ECO:0007669"/>
    <property type="project" value="UniProtKB-UniRule"/>
</dbReference>
<dbReference type="CDD" id="cd23937">
    <property type="entry name" value="GAPDH_C_E4PDH"/>
    <property type="match status" value="1"/>
</dbReference>
<dbReference type="CDD" id="cd17892">
    <property type="entry name" value="GAPDH_N_E4PDH"/>
    <property type="match status" value="1"/>
</dbReference>
<dbReference type="FunFam" id="3.30.360.10:FF:000007">
    <property type="entry name" value="D-erythrose-4-phosphate dehydrogenase"/>
    <property type="match status" value="1"/>
</dbReference>
<dbReference type="FunFam" id="3.40.50.720:FF:000001">
    <property type="entry name" value="Glyceraldehyde-3-phosphate dehydrogenase"/>
    <property type="match status" value="1"/>
</dbReference>
<dbReference type="Gene3D" id="3.30.360.10">
    <property type="entry name" value="Dihydrodipicolinate Reductase, domain 2"/>
    <property type="match status" value="1"/>
</dbReference>
<dbReference type="Gene3D" id="3.40.50.720">
    <property type="entry name" value="NAD(P)-binding Rossmann-like Domain"/>
    <property type="match status" value="1"/>
</dbReference>
<dbReference type="HAMAP" id="MF_01640">
    <property type="entry name" value="E4P_dehydrog"/>
    <property type="match status" value="1"/>
</dbReference>
<dbReference type="InterPro" id="IPR006422">
    <property type="entry name" value="E4P_DH_bac"/>
</dbReference>
<dbReference type="InterPro" id="IPR020831">
    <property type="entry name" value="GlycerAld/Erythrose_P_DH"/>
</dbReference>
<dbReference type="InterPro" id="IPR020830">
    <property type="entry name" value="GlycerAld_3-P_DH_AS"/>
</dbReference>
<dbReference type="InterPro" id="IPR020829">
    <property type="entry name" value="GlycerAld_3-P_DH_cat"/>
</dbReference>
<dbReference type="InterPro" id="IPR020828">
    <property type="entry name" value="GlycerAld_3-P_DH_NAD(P)-bd"/>
</dbReference>
<dbReference type="InterPro" id="IPR036291">
    <property type="entry name" value="NAD(P)-bd_dom_sf"/>
</dbReference>
<dbReference type="NCBIfam" id="TIGR01532">
    <property type="entry name" value="E4PD_g-proteo"/>
    <property type="match status" value="1"/>
</dbReference>
<dbReference type="NCBIfam" id="NF010058">
    <property type="entry name" value="PRK13535.1"/>
    <property type="match status" value="1"/>
</dbReference>
<dbReference type="PANTHER" id="PTHR43148">
    <property type="entry name" value="GLYCERALDEHYDE-3-PHOSPHATE DEHYDROGENASE 2"/>
    <property type="match status" value="1"/>
</dbReference>
<dbReference type="Pfam" id="PF02800">
    <property type="entry name" value="Gp_dh_C"/>
    <property type="match status" value="1"/>
</dbReference>
<dbReference type="Pfam" id="PF00044">
    <property type="entry name" value="Gp_dh_N"/>
    <property type="match status" value="1"/>
</dbReference>
<dbReference type="PIRSF" id="PIRSF000149">
    <property type="entry name" value="GAP_DH"/>
    <property type="match status" value="1"/>
</dbReference>
<dbReference type="PRINTS" id="PR00078">
    <property type="entry name" value="G3PDHDRGNASE"/>
</dbReference>
<dbReference type="SMART" id="SM00846">
    <property type="entry name" value="Gp_dh_N"/>
    <property type="match status" value="1"/>
</dbReference>
<dbReference type="SUPFAM" id="SSF55347">
    <property type="entry name" value="Glyceraldehyde-3-phosphate dehydrogenase-like, C-terminal domain"/>
    <property type="match status" value="1"/>
</dbReference>
<dbReference type="SUPFAM" id="SSF51735">
    <property type="entry name" value="NAD(P)-binding Rossmann-fold domains"/>
    <property type="match status" value="1"/>
</dbReference>
<dbReference type="PROSITE" id="PS00071">
    <property type="entry name" value="GAPDH"/>
    <property type="match status" value="1"/>
</dbReference>
<keyword id="KW-0963">Cytoplasm</keyword>
<keyword id="KW-0520">NAD</keyword>
<keyword id="KW-0560">Oxidoreductase</keyword>
<keyword id="KW-0664">Pyridoxine biosynthesis</keyword>
<proteinExistence type="inferred from homology"/>
<gene>
    <name evidence="1" type="primary">epd</name>
    <name type="ordered locus">YPA_0342</name>
</gene>